<organism>
    <name type="scientific">Kluyveromyces lactis (strain ATCC 8585 / CBS 2359 / DSM 70799 / NBRC 1267 / NRRL Y-1140 / WM37)</name>
    <name type="common">Yeast</name>
    <name type="synonym">Candida sphaerica</name>
    <dbReference type="NCBI Taxonomy" id="284590"/>
    <lineage>
        <taxon>Eukaryota</taxon>
        <taxon>Fungi</taxon>
        <taxon>Dikarya</taxon>
        <taxon>Ascomycota</taxon>
        <taxon>Saccharomycotina</taxon>
        <taxon>Saccharomycetes</taxon>
        <taxon>Saccharomycetales</taxon>
        <taxon>Saccharomycetaceae</taxon>
        <taxon>Kluyveromyces</taxon>
    </lineage>
</organism>
<name>RAD18_KLULA</name>
<comment type="function">
    <text evidence="1">E3 RING-finger protein, member of the UBC2/RAD6 epistasis group. Associates to the E2 ubiquitin conjugating enzyme UBC2/RAD6 to form the UBC2-RAD18 ubiquitin ligase complex involved in postreplicative repair (PRR) of damaged DNA.</text>
</comment>
<comment type="catalytic activity">
    <reaction>
        <text>S-ubiquitinyl-[E2 ubiquitin-conjugating enzyme]-L-cysteine + [acceptor protein]-L-lysine = [E2 ubiquitin-conjugating enzyme]-L-cysteine + N(6)-ubiquitinyl-[acceptor protein]-L-lysine.</text>
        <dbReference type="EC" id="2.3.2.27"/>
    </reaction>
</comment>
<comment type="pathway">
    <text>Protein modification; protein ubiquitination.</text>
</comment>
<comment type="subunit">
    <text evidence="1">Interacts with E2 UBC2, forming a complex with ubiquitin ligase activity.</text>
</comment>
<comment type="subcellular location">
    <subcellularLocation>
        <location evidence="1">Nucleus</location>
    </subcellularLocation>
</comment>
<comment type="similarity">
    <text evidence="6">Belongs to the RAD18 family.</text>
</comment>
<accession>Q6CTZ8</accession>
<keyword id="KW-0227">DNA damage</keyword>
<keyword id="KW-0234">DNA repair</keyword>
<keyword id="KW-0238">DNA-binding</keyword>
<keyword id="KW-0479">Metal-binding</keyword>
<keyword id="KW-0539">Nucleus</keyword>
<keyword id="KW-1185">Reference proteome</keyword>
<keyword id="KW-0808">Transferase</keyword>
<keyword id="KW-0833">Ubl conjugation pathway</keyword>
<keyword id="KW-0862">Zinc</keyword>
<keyword id="KW-0863">Zinc-finger</keyword>
<gene>
    <name type="primary">RAD18</name>
    <name type="ordered locus">KLLA0C08756g</name>
</gene>
<reference key="1">
    <citation type="journal article" date="2004" name="Nature">
        <title>Genome evolution in yeasts.</title>
        <authorList>
            <person name="Dujon B."/>
            <person name="Sherman D."/>
            <person name="Fischer G."/>
            <person name="Durrens P."/>
            <person name="Casaregola S."/>
            <person name="Lafontaine I."/>
            <person name="de Montigny J."/>
            <person name="Marck C."/>
            <person name="Neuveglise C."/>
            <person name="Talla E."/>
            <person name="Goffard N."/>
            <person name="Frangeul L."/>
            <person name="Aigle M."/>
            <person name="Anthouard V."/>
            <person name="Babour A."/>
            <person name="Barbe V."/>
            <person name="Barnay S."/>
            <person name="Blanchin S."/>
            <person name="Beckerich J.-M."/>
            <person name="Beyne E."/>
            <person name="Bleykasten C."/>
            <person name="Boisrame A."/>
            <person name="Boyer J."/>
            <person name="Cattolico L."/>
            <person name="Confanioleri F."/>
            <person name="de Daruvar A."/>
            <person name="Despons L."/>
            <person name="Fabre E."/>
            <person name="Fairhead C."/>
            <person name="Ferry-Dumazet H."/>
            <person name="Groppi A."/>
            <person name="Hantraye F."/>
            <person name="Hennequin C."/>
            <person name="Jauniaux N."/>
            <person name="Joyet P."/>
            <person name="Kachouri R."/>
            <person name="Kerrest A."/>
            <person name="Koszul R."/>
            <person name="Lemaire M."/>
            <person name="Lesur I."/>
            <person name="Ma L."/>
            <person name="Muller H."/>
            <person name="Nicaud J.-M."/>
            <person name="Nikolski M."/>
            <person name="Oztas S."/>
            <person name="Ozier-Kalogeropoulos O."/>
            <person name="Pellenz S."/>
            <person name="Potier S."/>
            <person name="Richard G.-F."/>
            <person name="Straub M.-L."/>
            <person name="Suleau A."/>
            <person name="Swennen D."/>
            <person name="Tekaia F."/>
            <person name="Wesolowski-Louvel M."/>
            <person name="Westhof E."/>
            <person name="Wirth B."/>
            <person name="Zeniou-Meyer M."/>
            <person name="Zivanovic Y."/>
            <person name="Bolotin-Fukuhara M."/>
            <person name="Thierry A."/>
            <person name="Bouchier C."/>
            <person name="Caudron B."/>
            <person name="Scarpelli C."/>
            <person name="Gaillardin C."/>
            <person name="Weissenbach J."/>
            <person name="Wincker P."/>
            <person name="Souciet J.-L."/>
        </authorList>
    </citation>
    <scope>NUCLEOTIDE SEQUENCE [LARGE SCALE GENOMIC DNA]</scope>
    <source>
        <strain>ATCC 8585 / CBS 2359 / DSM 70799 / NBRC 1267 / NRRL Y-1140 / WM37</strain>
    </source>
</reference>
<dbReference type="EC" id="2.3.2.27"/>
<dbReference type="EMBL" id="CR382123">
    <property type="protein sequence ID" value="CAH01442.1"/>
    <property type="molecule type" value="Genomic_DNA"/>
</dbReference>
<dbReference type="RefSeq" id="XP_452591.1">
    <property type="nucleotide sequence ID" value="XM_452591.1"/>
</dbReference>
<dbReference type="SMR" id="Q6CTZ8"/>
<dbReference type="FunCoup" id="Q6CTZ8">
    <property type="interactions" value="327"/>
</dbReference>
<dbReference type="STRING" id="284590.Q6CTZ8"/>
<dbReference type="PaxDb" id="284590-Q6CTZ8"/>
<dbReference type="KEGG" id="kla:KLLA0_C08756g"/>
<dbReference type="eggNOG" id="KOG0287">
    <property type="taxonomic scope" value="Eukaryota"/>
</dbReference>
<dbReference type="HOGENOM" id="CLU_028491_2_0_1"/>
<dbReference type="InParanoid" id="Q6CTZ8"/>
<dbReference type="OMA" id="IPNTGPR"/>
<dbReference type="UniPathway" id="UPA00143"/>
<dbReference type="Proteomes" id="UP000000598">
    <property type="component" value="Chromosome C"/>
</dbReference>
<dbReference type="GO" id="GO:0005634">
    <property type="term" value="C:nucleus"/>
    <property type="evidence" value="ECO:0007669"/>
    <property type="project" value="UniProtKB-SubCell"/>
</dbReference>
<dbReference type="GO" id="GO:0097505">
    <property type="term" value="C:Rad6-Rad18 complex"/>
    <property type="evidence" value="ECO:0007669"/>
    <property type="project" value="TreeGrafter"/>
</dbReference>
<dbReference type="GO" id="GO:0003697">
    <property type="term" value="F:single-stranded DNA binding"/>
    <property type="evidence" value="ECO:0007669"/>
    <property type="project" value="InterPro"/>
</dbReference>
<dbReference type="GO" id="GO:0061630">
    <property type="term" value="F:ubiquitin protein ligase activity"/>
    <property type="evidence" value="ECO:0007669"/>
    <property type="project" value="InterPro"/>
</dbReference>
<dbReference type="GO" id="GO:0008270">
    <property type="term" value="F:zinc ion binding"/>
    <property type="evidence" value="ECO:0007669"/>
    <property type="project" value="UniProtKB-KW"/>
</dbReference>
<dbReference type="GO" id="GO:0006301">
    <property type="term" value="P:postreplication repair"/>
    <property type="evidence" value="ECO:0007669"/>
    <property type="project" value="InterPro"/>
</dbReference>
<dbReference type="GO" id="GO:0006513">
    <property type="term" value="P:protein monoubiquitination"/>
    <property type="evidence" value="ECO:0007669"/>
    <property type="project" value="InterPro"/>
</dbReference>
<dbReference type="FunFam" id="3.30.40.10:FF:000172">
    <property type="entry name" value="E3 ubiquitin-protein ligase RAD18"/>
    <property type="match status" value="1"/>
</dbReference>
<dbReference type="Gene3D" id="3.30.160.60">
    <property type="entry name" value="Classic Zinc Finger"/>
    <property type="match status" value="1"/>
</dbReference>
<dbReference type="Gene3D" id="3.30.40.10">
    <property type="entry name" value="Zinc/RING finger domain, C3HC4 (zinc finger)"/>
    <property type="match status" value="1"/>
</dbReference>
<dbReference type="InterPro" id="IPR039577">
    <property type="entry name" value="Rad18"/>
</dbReference>
<dbReference type="InterPro" id="IPR004580">
    <property type="entry name" value="Rad18_fungi"/>
</dbReference>
<dbReference type="InterPro" id="IPR006642">
    <property type="entry name" value="Rad18_UBZ4"/>
</dbReference>
<dbReference type="InterPro" id="IPR003034">
    <property type="entry name" value="SAP_dom"/>
</dbReference>
<dbReference type="InterPro" id="IPR001841">
    <property type="entry name" value="Znf_RING"/>
</dbReference>
<dbReference type="InterPro" id="IPR013083">
    <property type="entry name" value="Znf_RING/FYVE/PHD"/>
</dbReference>
<dbReference type="InterPro" id="IPR017907">
    <property type="entry name" value="Znf_RING_CS"/>
</dbReference>
<dbReference type="NCBIfam" id="TIGR00599">
    <property type="entry name" value="rad18"/>
    <property type="match status" value="1"/>
</dbReference>
<dbReference type="PANTHER" id="PTHR14134">
    <property type="entry name" value="E3 UBIQUITIN-PROTEIN LIGASE RAD18"/>
    <property type="match status" value="1"/>
</dbReference>
<dbReference type="PANTHER" id="PTHR14134:SF2">
    <property type="entry name" value="E3 UBIQUITIN-PROTEIN LIGASE RAD18"/>
    <property type="match status" value="1"/>
</dbReference>
<dbReference type="Pfam" id="PF02037">
    <property type="entry name" value="SAP"/>
    <property type="match status" value="1"/>
</dbReference>
<dbReference type="Pfam" id="PF13923">
    <property type="entry name" value="zf-C3HC4_2"/>
    <property type="match status" value="1"/>
</dbReference>
<dbReference type="SMART" id="SM00184">
    <property type="entry name" value="RING"/>
    <property type="match status" value="1"/>
</dbReference>
<dbReference type="SMART" id="SM00513">
    <property type="entry name" value="SAP"/>
    <property type="match status" value="1"/>
</dbReference>
<dbReference type="SMART" id="SM00734">
    <property type="entry name" value="ZnF_Rad18"/>
    <property type="match status" value="1"/>
</dbReference>
<dbReference type="SUPFAM" id="SSF57850">
    <property type="entry name" value="RING/U-box"/>
    <property type="match status" value="1"/>
</dbReference>
<dbReference type="PROSITE" id="PS50800">
    <property type="entry name" value="SAP"/>
    <property type="match status" value="1"/>
</dbReference>
<dbReference type="PROSITE" id="PS00518">
    <property type="entry name" value="ZF_RING_1"/>
    <property type="match status" value="1"/>
</dbReference>
<dbReference type="PROSITE" id="PS50089">
    <property type="entry name" value="ZF_RING_2"/>
    <property type="match status" value="1"/>
</dbReference>
<dbReference type="PROSITE" id="PS51908">
    <property type="entry name" value="ZF_UBZ4"/>
    <property type="match status" value="1"/>
</dbReference>
<feature type="chain" id="PRO_0000056157" description="Postreplication repair E3 ubiquitin-protein ligase RAD18">
    <location>
        <begin position="1"/>
        <end position="427"/>
    </location>
</feature>
<feature type="domain" description="SAP" evidence="3">
    <location>
        <begin position="268"/>
        <end position="302"/>
    </location>
</feature>
<feature type="zinc finger region" description="RING-type" evidence="2">
    <location>
        <begin position="32"/>
        <end position="70"/>
    </location>
</feature>
<feature type="zinc finger region" description="UBZ4-type" evidence="4">
    <location>
        <begin position="168"/>
        <end position="196"/>
    </location>
</feature>
<feature type="region of interest" description="Disordered" evidence="5">
    <location>
        <begin position="113"/>
        <end position="170"/>
    </location>
</feature>
<feature type="region of interest" description="Disordered" evidence="5">
    <location>
        <begin position="202"/>
        <end position="228"/>
    </location>
</feature>
<feature type="region of interest" description="Disordered" evidence="5">
    <location>
        <begin position="392"/>
        <end position="427"/>
    </location>
</feature>
<feature type="compositionally biased region" description="Acidic residues" evidence="5">
    <location>
        <begin position="113"/>
        <end position="122"/>
    </location>
</feature>
<feature type="compositionally biased region" description="Basic and acidic residues" evidence="5">
    <location>
        <begin position="160"/>
        <end position="169"/>
    </location>
</feature>
<feature type="compositionally biased region" description="Basic and acidic residues" evidence="5">
    <location>
        <begin position="202"/>
        <end position="211"/>
    </location>
</feature>
<feature type="compositionally biased region" description="Polar residues" evidence="5">
    <location>
        <begin position="212"/>
        <end position="221"/>
    </location>
</feature>
<feature type="compositionally biased region" description="Basic and acidic residues" evidence="5">
    <location>
        <begin position="392"/>
        <end position="404"/>
    </location>
</feature>
<feature type="binding site" evidence="4">
    <location>
        <position position="171"/>
    </location>
    <ligand>
        <name>Zn(2+)</name>
        <dbReference type="ChEBI" id="CHEBI:29105"/>
    </ligand>
</feature>
<feature type="binding site" evidence="4">
    <location>
        <position position="174"/>
    </location>
    <ligand>
        <name>Zn(2+)</name>
        <dbReference type="ChEBI" id="CHEBI:29105"/>
    </ligand>
</feature>
<feature type="binding site" evidence="4">
    <location>
        <position position="187"/>
    </location>
    <ligand>
        <name>Zn(2+)</name>
        <dbReference type="ChEBI" id="CHEBI:29105"/>
    </ligand>
</feature>
<feature type="binding site" evidence="4">
    <location>
        <position position="191"/>
    </location>
    <ligand>
        <name>Zn(2+)</name>
        <dbReference type="ChEBI" id="CHEBI:29105"/>
    </ligand>
</feature>
<protein>
    <recommendedName>
        <fullName>Postreplication repair E3 ubiquitin-protein ligase RAD18</fullName>
        <ecNumber>2.3.2.27</ecNumber>
    </recommendedName>
    <alternativeName>
        <fullName evidence="6">RING-type E3 ubiquitin transferase RAD18</fullName>
    </alternativeName>
</protein>
<evidence type="ECO:0000250" key="1"/>
<evidence type="ECO:0000255" key="2">
    <source>
        <dbReference type="PROSITE-ProRule" id="PRU00175"/>
    </source>
</evidence>
<evidence type="ECO:0000255" key="3">
    <source>
        <dbReference type="PROSITE-ProRule" id="PRU00186"/>
    </source>
</evidence>
<evidence type="ECO:0000255" key="4">
    <source>
        <dbReference type="PROSITE-ProRule" id="PRU01256"/>
    </source>
</evidence>
<evidence type="ECO:0000256" key="5">
    <source>
        <dbReference type="SAM" id="MobiDB-lite"/>
    </source>
</evidence>
<evidence type="ECO:0000305" key="6"/>
<sequence length="427" mass="48688">MKLSVPETISNPRDFLHTSVPQLTDLDSLLRCHICKDFLKASVLTPCGHSFCSICIRKYLQKESKCPLCLSDLTESMLQKEFLVQEICSSYVKLRGSLQKHLTISSQEEEKDNEIIISDEADTSVGTKRGTPDSPSLSSVSTKKRKHDGITTLLMKKKTDHPQRQEKKAQCPICSKHLPLSELEGSHIDECLNKGSSLERSDSFEILDERTPSPSMESSHQPLEEKTSLPSSHLLEVKEKKDITYHNERYLNSGLLQQKENRLPRLDFQSLSMTQLKQKLASLALPSNGTKQQMVARYKHYEMLWNSNFLDSIDPVDENELKRRLSSWEAKHNTDHSSDSNSITNLLRGNKRTNAISAMIKLFKSDRFDRKGWMRHHTSTFKALKLEAQRSDKLAKMKKEELSQKSDANSEVSSEPILKIDQTSENN</sequence>
<proteinExistence type="inferred from homology"/>